<evidence type="ECO:0000255" key="1">
    <source>
        <dbReference type="HAMAP-Rule" id="MF_01338"/>
    </source>
</evidence>
<feature type="chain" id="PRO_1000142750" description="Ribulose bisphosphate carboxylase large chain">
    <location>
        <begin position="1"/>
        <end position="476"/>
    </location>
</feature>
<feature type="active site" description="Proton acceptor" evidence="1">
    <location>
        <position position="176"/>
    </location>
</feature>
<feature type="active site" description="Proton acceptor" evidence="1">
    <location>
        <position position="295"/>
    </location>
</feature>
<feature type="binding site" description="in homodimeric partner" evidence="1">
    <location>
        <position position="124"/>
    </location>
    <ligand>
        <name>substrate</name>
    </ligand>
</feature>
<feature type="binding site" evidence="1">
    <location>
        <position position="174"/>
    </location>
    <ligand>
        <name>substrate</name>
    </ligand>
</feature>
<feature type="binding site" evidence="1">
    <location>
        <position position="178"/>
    </location>
    <ligand>
        <name>substrate</name>
    </ligand>
</feature>
<feature type="binding site" description="via carbamate group" evidence="1">
    <location>
        <position position="202"/>
    </location>
    <ligand>
        <name>Mg(2+)</name>
        <dbReference type="ChEBI" id="CHEBI:18420"/>
    </ligand>
</feature>
<feature type="binding site" evidence="1">
    <location>
        <position position="204"/>
    </location>
    <ligand>
        <name>Mg(2+)</name>
        <dbReference type="ChEBI" id="CHEBI:18420"/>
    </ligand>
</feature>
<feature type="binding site" evidence="1">
    <location>
        <position position="205"/>
    </location>
    <ligand>
        <name>Mg(2+)</name>
        <dbReference type="ChEBI" id="CHEBI:18420"/>
    </ligand>
</feature>
<feature type="binding site" evidence="1">
    <location>
        <position position="296"/>
    </location>
    <ligand>
        <name>substrate</name>
    </ligand>
</feature>
<feature type="binding site" evidence="1">
    <location>
        <position position="328"/>
    </location>
    <ligand>
        <name>substrate</name>
    </ligand>
</feature>
<feature type="binding site" evidence="1">
    <location>
        <position position="380"/>
    </location>
    <ligand>
        <name>substrate</name>
    </ligand>
</feature>
<feature type="site" description="Transition state stabilizer" evidence="1">
    <location>
        <position position="335"/>
    </location>
</feature>
<feature type="modified residue" description="N6-carboxylysine" evidence="1">
    <location>
        <position position="202"/>
    </location>
</feature>
<feature type="disulfide bond" description="Interchain; in linked form" evidence="1">
    <location>
        <position position="248"/>
    </location>
</feature>
<reference key="1">
    <citation type="journal article" date="2013" name="Plant Physiol.">
        <title>A Nostoc punctiforme Sugar Transporter Necessary to Establish a Cyanobacterium-Plant Symbiosis.</title>
        <authorList>
            <person name="Ekman M."/>
            <person name="Picossi S."/>
            <person name="Campbell E.L."/>
            <person name="Meeks J.C."/>
            <person name="Flores E."/>
        </authorList>
    </citation>
    <scope>NUCLEOTIDE SEQUENCE [LARGE SCALE GENOMIC DNA]</scope>
    <source>
        <strain>ATCC 29133 / PCC 73102</strain>
    </source>
</reference>
<sequence>MSYAQTKTQSKSGYQAGVKDYRLTYYTPDYTPKDTDLLAAFRMTPQPGVPPEEAGAAVAAESSTGTWTTVWTDLLTDLDRYKGRCYDIEPVPGEDNQYICYVAYPLDLFEEGSVTNVLTSIVGNVFGFKALRALRLEDIRFPVAYIKTFQGPPHGIQVERDKLNKYGRPLLGCTIKPKLGLSAKNYGRAVYECLRGGLDFTKDDENINSAPFQRWRDRFLFVAEAINKAQAETGEIKGHYLNVTAPTCEQMLQRAEYAKELKQPIIMHDYLTAGFTANTTLARWCRDNGILLHIHRAMHAVIDRQKNHGIHFRVLAKALRLSGGDHIHTGTVVGKLEGERGITMGFVDLLRENYIEQDKSRGIYFTQDWASLPGVMAVASGGIHVWHMPALVEIFGDDSVLQFGGGTLGHPWGNAPGATANRVALEAVVQARNEGRNLAREGNDIIREAAKWSPELAVACELWKEIKFEFEAMDTV</sequence>
<keyword id="KW-1283">Bacterial microcompartment</keyword>
<keyword id="KW-0113">Calvin cycle</keyword>
<keyword id="KW-0120">Carbon dioxide fixation</keyword>
<keyword id="KW-1282">Carboxysome</keyword>
<keyword id="KW-1015">Disulfide bond</keyword>
<keyword id="KW-0456">Lyase</keyword>
<keyword id="KW-0460">Magnesium</keyword>
<keyword id="KW-0479">Metal-binding</keyword>
<keyword id="KW-0503">Monooxygenase</keyword>
<keyword id="KW-0560">Oxidoreductase</keyword>
<keyword id="KW-0601">Photorespiration</keyword>
<keyword id="KW-0602">Photosynthesis</keyword>
<keyword id="KW-1185">Reference proteome</keyword>
<dbReference type="EC" id="4.1.1.39" evidence="1"/>
<dbReference type="EMBL" id="CP001037">
    <property type="protein sequence ID" value="ACC82570.1"/>
    <property type="molecule type" value="Genomic_DNA"/>
</dbReference>
<dbReference type="RefSeq" id="WP_012410537.1">
    <property type="nucleotide sequence ID" value="NC_010628.1"/>
</dbReference>
<dbReference type="SMR" id="B2J8T2"/>
<dbReference type="STRING" id="63737.Npun_F4195"/>
<dbReference type="EnsemblBacteria" id="ACC82570">
    <property type="protein sequence ID" value="ACC82570"/>
    <property type="gene ID" value="Npun_F4195"/>
</dbReference>
<dbReference type="KEGG" id="npu:Npun_F4195"/>
<dbReference type="eggNOG" id="COG1850">
    <property type="taxonomic scope" value="Bacteria"/>
</dbReference>
<dbReference type="HOGENOM" id="CLU_031450_2_0_3"/>
<dbReference type="OrthoDB" id="9770811at2"/>
<dbReference type="PhylomeDB" id="B2J8T2"/>
<dbReference type="Proteomes" id="UP000001191">
    <property type="component" value="Chromosome"/>
</dbReference>
<dbReference type="GO" id="GO:0031470">
    <property type="term" value="C:carboxysome"/>
    <property type="evidence" value="ECO:0007669"/>
    <property type="project" value="UniProtKB-SubCell"/>
</dbReference>
<dbReference type="GO" id="GO:0000287">
    <property type="term" value="F:magnesium ion binding"/>
    <property type="evidence" value="ECO:0007669"/>
    <property type="project" value="UniProtKB-UniRule"/>
</dbReference>
<dbReference type="GO" id="GO:0004497">
    <property type="term" value="F:monooxygenase activity"/>
    <property type="evidence" value="ECO:0007669"/>
    <property type="project" value="UniProtKB-KW"/>
</dbReference>
<dbReference type="GO" id="GO:0016984">
    <property type="term" value="F:ribulose-bisphosphate carboxylase activity"/>
    <property type="evidence" value="ECO:0007669"/>
    <property type="project" value="UniProtKB-UniRule"/>
</dbReference>
<dbReference type="GO" id="GO:0009853">
    <property type="term" value="P:photorespiration"/>
    <property type="evidence" value="ECO:0007669"/>
    <property type="project" value="UniProtKB-KW"/>
</dbReference>
<dbReference type="GO" id="GO:0019253">
    <property type="term" value="P:reductive pentose-phosphate cycle"/>
    <property type="evidence" value="ECO:0007669"/>
    <property type="project" value="UniProtKB-UniRule"/>
</dbReference>
<dbReference type="CDD" id="cd08212">
    <property type="entry name" value="RuBisCO_large_I"/>
    <property type="match status" value="1"/>
</dbReference>
<dbReference type="Gene3D" id="3.20.20.110">
    <property type="entry name" value="Ribulose bisphosphate carboxylase, large subunit, C-terminal domain"/>
    <property type="match status" value="1"/>
</dbReference>
<dbReference type="Gene3D" id="3.30.70.150">
    <property type="entry name" value="RuBisCO large subunit, N-terminal domain"/>
    <property type="match status" value="1"/>
</dbReference>
<dbReference type="HAMAP" id="MF_01338">
    <property type="entry name" value="RuBisCO_L_type1"/>
    <property type="match status" value="1"/>
</dbReference>
<dbReference type="InterPro" id="IPR033966">
    <property type="entry name" value="RuBisCO"/>
</dbReference>
<dbReference type="InterPro" id="IPR020878">
    <property type="entry name" value="RuBisCo_large_chain_AS"/>
</dbReference>
<dbReference type="InterPro" id="IPR000685">
    <property type="entry name" value="RuBisCO_lsu_C"/>
</dbReference>
<dbReference type="InterPro" id="IPR036376">
    <property type="entry name" value="RuBisCO_lsu_C_sf"/>
</dbReference>
<dbReference type="InterPro" id="IPR017443">
    <property type="entry name" value="RuBisCO_lsu_fd_N"/>
</dbReference>
<dbReference type="InterPro" id="IPR036422">
    <property type="entry name" value="RuBisCO_lsu_N_sf"/>
</dbReference>
<dbReference type="InterPro" id="IPR020888">
    <property type="entry name" value="RuBisCO_lsuI"/>
</dbReference>
<dbReference type="NCBIfam" id="NF003252">
    <property type="entry name" value="PRK04208.1"/>
    <property type="match status" value="1"/>
</dbReference>
<dbReference type="PANTHER" id="PTHR42704">
    <property type="entry name" value="RIBULOSE BISPHOSPHATE CARBOXYLASE"/>
    <property type="match status" value="1"/>
</dbReference>
<dbReference type="PANTHER" id="PTHR42704:SF17">
    <property type="entry name" value="RIBULOSE BISPHOSPHATE CARBOXYLASE LARGE CHAIN"/>
    <property type="match status" value="1"/>
</dbReference>
<dbReference type="Pfam" id="PF00016">
    <property type="entry name" value="RuBisCO_large"/>
    <property type="match status" value="1"/>
</dbReference>
<dbReference type="Pfam" id="PF02788">
    <property type="entry name" value="RuBisCO_large_N"/>
    <property type="match status" value="1"/>
</dbReference>
<dbReference type="SFLD" id="SFLDG01052">
    <property type="entry name" value="RuBisCO"/>
    <property type="match status" value="1"/>
</dbReference>
<dbReference type="SFLD" id="SFLDS00014">
    <property type="entry name" value="RuBisCO"/>
    <property type="match status" value="1"/>
</dbReference>
<dbReference type="SFLD" id="SFLDG00301">
    <property type="entry name" value="RuBisCO-like_proteins"/>
    <property type="match status" value="1"/>
</dbReference>
<dbReference type="SUPFAM" id="SSF51649">
    <property type="entry name" value="RuBisCo, C-terminal domain"/>
    <property type="match status" value="1"/>
</dbReference>
<dbReference type="SUPFAM" id="SSF54966">
    <property type="entry name" value="RuBisCO, large subunit, small (N-terminal) domain"/>
    <property type="match status" value="1"/>
</dbReference>
<dbReference type="PROSITE" id="PS00157">
    <property type="entry name" value="RUBISCO_LARGE"/>
    <property type="match status" value="1"/>
</dbReference>
<gene>
    <name evidence="1" type="primary">cbbL</name>
    <name evidence="1" type="synonym">rbcL</name>
    <name type="ordered locus">Npun_F4195</name>
</gene>
<name>RBL_NOSP7</name>
<accession>B2J8T2</accession>
<organism>
    <name type="scientific">Nostoc punctiforme (strain ATCC 29133 / PCC 73102)</name>
    <dbReference type="NCBI Taxonomy" id="63737"/>
    <lineage>
        <taxon>Bacteria</taxon>
        <taxon>Bacillati</taxon>
        <taxon>Cyanobacteriota</taxon>
        <taxon>Cyanophyceae</taxon>
        <taxon>Nostocales</taxon>
        <taxon>Nostocaceae</taxon>
        <taxon>Nostoc</taxon>
    </lineage>
</organism>
<comment type="function">
    <text evidence="1">RuBisCO catalyzes two reactions: the carboxylation of D-ribulose 1,5-bisphosphate, the primary event in carbon dioxide fixation, as well as the oxidative fragmentation of the pentose substrate in the photorespiration process. Both reactions occur simultaneously and in competition at the same active site.</text>
</comment>
<comment type="catalytic activity">
    <reaction evidence="1">
        <text>2 (2R)-3-phosphoglycerate + 2 H(+) = D-ribulose 1,5-bisphosphate + CO2 + H2O</text>
        <dbReference type="Rhea" id="RHEA:23124"/>
        <dbReference type="ChEBI" id="CHEBI:15377"/>
        <dbReference type="ChEBI" id="CHEBI:15378"/>
        <dbReference type="ChEBI" id="CHEBI:16526"/>
        <dbReference type="ChEBI" id="CHEBI:57870"/>
        <dbReference type="ChEBI" id="CHEBI:58272"/>
        <dbReference type="EC" id="4.1.1.39"/>
    </reaction>
</comment>
<comment type="catalytic activity">
    <reaction evidence="1">
        <text>D-ribulose 1,5-bisphosphate + O2 = 2-phosphoglycolate + (2R)-3-phosphoglycerate + 2 H(+)</text>
        <dbReference type="Rhea" id="RHEA:36631"/>
        <dbReference type="ChEBI" id="CHEBI:15378"/>
        <dbReference type="ChEBI" id="CHEBI:15379"/>
        <dbReference type="ChEBI" id="CHEBI:57870"/>
        <dbReference type="ChEBI" id="CHEBI:58033"/>
        <dbReference type="ChEBI" id="CHEBI:58272"/>
    </reaction>
</comment>
<comment type="cofactor">
    <cofactor evidence="1">
        <name>Mg(2+)</name>
        <dbReference type="ChEBI" id="CHEBI:18420"/>
    </cofactor>
    <text evidence="1">Binds 1 Mg(2+) ion per subunit.</text>
</comment>
<comment type="subunit">
    <text evidence="1">Heterohexadecamer of 8 large chains and 8 small chains; disulfide-linked. The disulfide link is formed within the large subunit homodimers.</text>
</comment>
<comment type="subcellular location">
    <subcellularLocation>
        <location evidence="1">Carboxysome</location>
    </subcellularLocation>
</comment>
<comment type="PTM">
    <text evidence="1">The disulfide bond which can form in the large chain dimeric partners within the hexadecamer appears to be associated with oxidative stress and protein turnover.</text>
</comment>
<comment type="miscellaneous">
    <text evidence="1">The basic functional RuBisCO is composed of a large chain homodimer in a 'head-to-tail' conformation. In form I RuBisCO this homodimer is arranged in a barrel-like tetramer with the small subunits forming a tetrameric 'cap' on each end of the 'barrel'.</text>
</comment>
<comment type="similarity">
    <text evidence="1">Belongs to the RuBisCO large chain family. Type I subfamily.</text>
</comment>
<proteinExistence type="inferred from homology"/>
<protein>
    <recommendedName>
        <fullName evidence="1">Ribulose bisphosphate carboxylase large chain</fullName>
        <shortName evidence="1">RuBisCO large subunit</shortName>
        <ecNumber evidence="1">4.1.1.39</ecNumber>
    </recommendedName>
</protein>